<reference key="1">
    <citation type="journal article" date="1990" name="Korean J. Biochem.">
        <title>Primary structure of two proteinase inhibitor II genes closely linked in the potato genome.</title>
        <authorList>
            <person name="Choi Y."/>
            <person name="Moon Y."/>
            <person name="Lee J.S."/>
        </authorList>
    </citation>
    <scope>NUCLEOTIDE SEQUENCE [GENOMIC DNA]</scope>
    <source>
        <strain>cv. Russet Burbank-0</strain>
    </source>
</reference>
<comment type="similarity">
    <text evidence="3">Belongs to the protease inhibitor I20 (potato type II proteinase inhibitor) family.</text>
</comment>
<dbReference type="EMBL" id="Z12753">
    <property type="protein sequence ID" value="CAA78277.1"/>
    <property type="molecule type" value="Genomic_DNA"/>
</dbReference>
<dbReference type="PIR" id="T07597">
    <property type="entry name" value="T07597"/>
</dbReference>
<dbReference type="SMR" id="Q00782"/>
<dbReference type="PaxDb" id="4113-PGSC0003DMT400011563"/>
<dbReference type="eggNOG" id="ENOG502R7RQ">
    <property type="taxonomic scope" value="Eukaryota"/>
</dbReference>
<dbReference type="InParanoid" id="Q00782"/>
<dbReference type="Proteomes" id="UP000011115">
    <property type="component" value="Unassembled WGS sequence"/>
</dbReference>
<dbReference type="ExpressionAtlas" id="Q00782">
    <property type="expression patterns" value="baseline"/>
</dbReference>
<dbReference type="GO" id="GO:0004867">
    <property type="term" value="F:serine-type endopeptidase inhibitor activity"/>
    <property type="evidence" value="ECO:0007669"/>
    <property type="project" value="UniProtKB-KW"/>
</dbReference>
<dbReference type="Gene3D" id="3.30.60.30">
    <property type="match status" value="2"/>
</dbReference>
<dbReference type="InterPro" id="IPR003465">
    <property type="entry name" value="Prot_inh_I20"/>
</dbReference>
<dbReference type="InterPro" id="IPR051391">
    <property type="entry name" value="Protease_inhibitor_I20"/>
</dbReference>
<dbReference type="PANTHER" id="PTHR33832:SF23">
    <property type="entry name" value="PROTEINASE INHIBITOR TYPE-2 P303.51"/>
    <property type="match status" value="1"/>
</dbReference>
<dbReference type="PANTHER" id="PTHR33832">
    <property type="entry name" value="SERINE-TYPE ENDOPEPTIDASE INHIBITOR"/>
    <property type="match status" value="1"/>
</dbReference>
<dbReference type="Pfam" id="PF02428">
    <property type="entry name" value="Prot_inhib_II"/>
    <property type="match status" value="2"/>
</dbReference>
<dbReference type="SUPFAM" id="SSF100897">
    <property type="entry name" value="Plant proteinase inhibitors"/>
    <property type="match status" value="1"/>
</dbReference>
<proteinExistence type="inferred from homology"/>
<name>IP2X_SOLTU</name>
<protein>
    <recommendedName>
        <fullName>Proteinase inhibitor type-2</fullName>
    </recommendedName>
    <alternativeName>
        <fullName>Proteinase inhibitor type II</fullName>
    </alternativeName>
</protein>
<keyword id="KW-1015">Disulfide bond</keyword>
<keyword id="KW-0646">Protease inhibitor</keyword>
<keyword id="KW-1185">Reference proteome</keyword>
<keyword id="KW-0677">Repeat</keyword>
<keyword id="KW-0722">Serine protease inhibitor</keyword>
<keyword id="KW-0732">Signal</keyword>
<organism>
    <name type="scientific">Solanum tuberosum</name>
    <name type="common">Potato</name>
    <dbReference type="NCBI Taxonomy" id="4113"/>
    <lineage>
        <taxon>Eukaryota</taxon>
        <taxon>Viridiplantae</taxon>
        <taxon>Streptophyta</taxon>
        <taxon>Embryophyta</taxon>
        <taxon>Tracheophyta</taxon>
        <taxon>Spermatophyta</taxon>
        <taxon>Magnoliopsida</taxon>
        <taxon>eudicotyledons</taxon>
        <taxon>Gunneridae</taxon>
        <taxon>Pentapetalae</taxon>
        <taxon>asterids</taxon>
        <taxon>lamiids</taxon>
        <taxon>Solanales</taxon>
        <taxon>Solanaceae</taxon>
        <taxon>Solanoideae</taxon>
        <taxon>Solaneae</taxon>
        <taxon>Solanum</taxon>
    </lineage>
</organism>
<accession>Q00782</accession>
<feature type="signal peptide" evidence="2">
    <location>
        <begin position="1"/>
        <end position="24"/>
    </location>
</feature>
<feature type="chain" id="PRO_0000025318" description="Proteinase inhibitor type-2">
    <location>
        <begin position="25"/>
        <end position="158"/>
    </location>
</feature>
<feature type="repeat" description="1">
    <location>
        <begin position="29"/>
        <end position="86"/>
    </location>
</feature>
<feature type="repeat" description="2">
    <location>
        <begin position="87"/>
        <end position="146"/>
    </location>
</feature>
<feature type="site" description="Reactive bond for chymotrypsin" evidence="3">
    <location>
        <begin position="35"/>
        <end position="36"/>
    </location>
</feature>
<feature type="site" description="Reactive bond for trypsin" evidence="3">
    <location>
        <begin position="92"/>
        <end position="93"/>
    </location>
</feature>
<feature type="disulfide bond" evidence="1">
    <location>
        <begin position="33"/>
        <end position="121"/>
    </location>
</feature>
<feature type="disulfide bond" evidence="1">
    <location>
        <begin position="37"/>
        <end position="117"/>
    </location>
</feature>
<feature type="disulfide bond" evidence="1">
    <location>
        <begin position="45"/>
        <end position="127"/>
    </location>
</feature>
<feature type="disulfide bond" evidence="1">
    <location>
        <begin position="57"/>
        <end position="94"/>
    </location>
</feature>
<feature type="disulfide bond" evidence="1">
    <location>
        <begin position="60"/>
        <end position="78"/>
    </location>
</feature>
<feature type="disulfide bond" evidence="1">
    <location>
        <begin position="61"/>
        <end position="90"/>
    </location>
</feature>
<feature type="disulfide bond" evidence="1">
    <location>
        <begin position="67"/>
        <end position="103"/>
    </location>
</feature>
<feature type="disulfide bond" evidence="1">
    <location>
        <begin position="120"/>
        <end position="138"/>
    </location>
</feature>
<evidence type="ECO:0000250" key="1"/>
<evidence type="ECO:0000255" key="2"/>
<evidence type="ECO:0000305" key="3"/>
<sequence length="158" mass="17132">MAIHKEVSFLAYLLVLGMLLFVSAMEHVDAKACTLECGNLGYGICPRSEGSPENPICTNCCAGYKGCNYYSANGTFICEGQSHPKNPKACPRNCDPHIAYSKCPRSGGKTLIYPTGCTTCCTGYTDCYYFGKDGKFVCEGESIEPKACTLECDSRLHT</sequence>